<accession>Q2S3F0</accession>
<sequence>MPPWFRREKAGIRTTREEQNEMPEGQWVKCPETGEITNRRELEENLLVFPGSGYHFGMDSHQYFGFLFDDGDYDLHDTDLRSVDALNFEDRKPYSQRLESAVEETGQNEAVQAATGSVGGHPVSMAGMDFSFIGGSMGSVVGETVARAIKRAYTEGMPLITIAQSGGARMMEGALSLMQMAKTSAHLTRLDEAGLPFISILTHPTTGGVTASFAMLGDIHIAEPDALIGFAGPRVIRETIGSDLPEGFQKSEFLQEHGFVDMIVDRRRLRRRIIRLLNLLME</sequence>
<gene>
    <name evidence="1" type="primary">accD</name>
    <name type="ordered locus">SRU_1155</name>
</gene>
<reference key="1">
    <citation type="journal article" date="2005" name="Proc. Natl. Acad. Sci. U.S.A.">
        <title>The genome of Salinibacter ruber: convergence and gene exchange among hyperhalophilic bacteria and archaea.</title>
        <authorList>
            <person name="Mongodin E.F."/>
            <person name="Nelson K.E."/>
            <person name="Daugherty S."/>
            <person name="DeBoy R.T."/>
            <person name="Wister J."/>
            <person name="Khouri H."/>
            <person name="Weidman J."/>
            <person name="Walsh D.A."/>
            <person name="Papke R.T."/>
            <person name="Sanchez Perez G."/>
            <person name="Sharma A.K."/>
            <person name="Nesbo C.L."/>
            <person name="MacLeod D."/>
            <person name="Bapteste E."/>
            <person name="Doolittle W.F."/>
            <person name="Charlebois R.L."/>
            <person name="Legault B."/>
            <person name="Rodriguez-Valera F."/>
        </authorList>
    </citation>
    <scope>NUCLEOTIDE SEQUENCE [LARGE SCALE GENOMIC DNA]</scope>
    <source>
        <strain>DSM 13855 / CECT 5946 / M31</strain>
    </source>
</reference>
<feature type="chain" id="PRO_0000389844" description="Acetyl-coenzyme A carboxylase carboxyl transferase subunit beta">
    <location>
        <begin position="1"/>
        <end position="282"/>
    </location>
</feature>
<feature type="domain" description="CoA carboxyltransferase N-terminal" evidence="2">
    <location>
        <begin position="26"/>
        <end position="282"/>
    </location>
</feature>
<dbReference type="EC" id="2.1.3.15" evidence="1"/>
<dbReference type="EMBL" id="CP000159">
    <property type="protein sequence ID" value="ABC43897.1"/>
    <property type="molecule type" value="Genomic_DNA"/>
</dbReference>
<dbReference type="RefSeq" id="WP_011403909.1">
    <property type="nucleotide sequence ID" value="NC_007677.1"/>
</dbReference>
<dbReference type="RefSeq" id="YP_445281.1">
    <property type="nucleotide sequence ID" value="NC_007677.1"/>
</dbReference>
<dbReference type="SMR" id="Q2S3F0"/>
<dbReference type="STRING" id="309807.SRU_1155"/>
<dbReference type="EnsemblBacteria" id="ABC43897">
    <property type="protein sequence ID" value="ABC43897"/>
    <property type="gene ID" value="SRU_1155"/>
</dbReference>
<dbReference type="GeneID" id="83728062"/>
<dbReference type="KEGG" id="sru:SRU_1155"/>
<dbReference type="PATRIC" id="fig|309807.25.peg.1194"/>
<dbReference type="eggNOG" id="COG0777">
    <property type="taxonomic scope" value="Bacteria"/>
</dbReference>
<dbReference type="HOGENOM" id="CLU_015486_1_0_10"/>
<dbReference type="OrthoDB" id="9772975at2"/>
<dbReference type="UniPathway" id="UPA00655">
    <property type="reaction ID" value="UER00711"/>
</dbReference>
<dbReference type="Proteomes" id="UP000008674">
    <property type="component" value="Chromosome"/>
</dbReference>
<dbReference type="GO" id="GO:0009317">
    <property type="term" value="C:acetyl-CoA carboxylase complex"/>
    <property type="evidence" value="ECO:0007669"/>
    <property type="project" value="InterPro"/>
</dbReference>
<dbReference type="GO" id="GO:0003989">
    <property type="term" value="F:acetyl-CoA carboxylase activity"/>
    <property type="evidence" value="ECO:0007669"/>
    <property type="project" value="InterPro"/>
</dbReference>
<dbReference type="GO" id="GO:0005524">
    <property type="term" value="F:ATP binding"/>
    <property type="evidence" value="ECO:0007669"/>
    <property type="project" value="UniProtKB-KW"/>
</dbReference>
<dbReference type="GO" id="GO:0016743">
    <property type="term" value="F:carboxyl- or carbamoyltransferase activity"/>
    <property type="evidence" value="ECO:0007669"/>
    <property type="project" value="UniProtKB-UniRule"/>
</dbReference>
<dbReference type="GO" id="GO:0006633">
    <property type="term" value="P:fatty acid biosynthetic process"/>
    <property type="evidence" value="ECO:0007669"/>
    <property type="project" value="UniProtKB-KW"/>
</dbReference>
<dbReference type="GO" id="GO:2001295">
    <property type="term" value="P:malonyl-CoA biosynthetic process"/>
    <property type="evidence" value="ECO:0007669"/>
    <property type="project" value="UniProtKB-UniRule"/>
</dbReference>
<dbReference type="Gene3D" id="3.90.226.10">
    <property type="entry name" value="2-enoyl-CoA Hydratase, Chain A, domain 1"/>
    <property type="match status" value="1"/>
</dbReference>
<dbReference type="HAMAP" id="MF_01395">
    <property type="entry name" value="AcetylCoA_CT_beta"/>
    <property type="match status" value="1"/>
</dbReference>
<dbReference type="InterPro" id="IPR034733">
    <property type="entry name" value="AcCoA_carboxyl_beta"/>
</dbReference>
<dbReference type="InterPro" id="IPR000438">
    <property type="entry name" value="Acetyl_CoA_COase_Trfase_b_su"/>
</dbReference>
<dbReference type="InterPro" id="IPR029045">
    <property type="entry name" value="ClpP/crotonase-like_dom_sf"/>
</dbReference>
<dbReference type="InterPro" id="IPR011762">
    <property type="entry name" value="COA_CT_N"/>
</dbReference>
<dbReference type="NCBIfam" id="TIGR00515">
    <property type="entry name" value="accD"/>
    <property type="match status" value="1"/>
</dbReference>
<dbReference type="PANTHER" id="PTHR42995">
    <property type="entry name" value="ACETYL-COENZYME A CARBOXYLASE CARBOXYL TRANSFERASE SUBUNIT BETA, CHLOROPLASTIC"/>
    <property type="match status" value="1"/>
</dbReference>
<dbReference type="PANTHER" id="PTHR42995:SF5">
    <property type="entry name" value="ACETYL-COENZYME A CARBOXYLASE CARBOXYL TRANSFERASE SUBUNIT BETA, CHLOROPLASTIC"/>
    <property type="match status" value="1"/>
</dbReference>
<dbReference type="Pfam" id="PF01039">
    <property type="entry name" value="Carboxyl_trans"/>
    <property type="match status" value="1"/>
</dbReference>
<dbReference type="PRINTS" id="PR01070">
    <property type="entry name" value="ACCCTRFRASEB"/>
</dbReference>
<dbReference type="SUPFAM" id="SSF52096">
    <property type="entry name" value="ClpP/crotonase"/>
    <property type="match status" value="1"/>
</dbReference>
<dbReference type="PROSITE" id="PS50980">
    <property type="entry name" value="COA_CT_NTER"/>
    <property type="match status" value="1"/>
</dbReference>
<protein>
    <recommendedName>
        <fullName evidence="1">Acetyl-coenzyme A carboxylase carboxyl transferase subunit beta</fullName>
        <shortName evidence="1">ACCase subunit beta</shortName>
        <shortName evidence="1">Acetyl-CoA carboxylase carboxyltransferase subunit beta</shortName>
        <ecNumber evidence="1">2.1.3.15</ecNumber>
    </recommendedName>
</protein>
<organism>
    <name type="scientific">Salinibacter ruber (strain DSM 13855 / M31)</name>
    <dbReference type="NCBI Taxonomy" id="309807"/>
    <lineage>
        <taxon>Bacteria</taxon>
        <taxon>Pseudomonadati</taxon>
        <taxon>Rhodothermota</taxon>
        <taxon>Rhodothermia</taxon>
        <taxon>Rhodothermales</taxon>
        <taxon>Salinibacteraceae</taxon>
        <taxon>Salinibacter</taxon>
    </lineage>
</organism>
<comment type="function">
    <text evidence="1">Component of the acetyl coenzyme A carboxylase (ACC) complex. Biotin carboxylase (BC) catalyzes the carboxylation of biotin on its carrier protein (BCCP) and then the CO(2) group is transferred by the transcarboxylase to acetyl-CoA to form malonyl-CoA.</text>
</comment>
<comment type="catalytic activity">
    <reaction evidence="1">
        <text>N(6)-carboxybiotinyl-L-lysyl-[protein] + acetyl-CoA = N(6)-biotinyl-L-lysyl-[protein] + malonyl-CoA</text>
        <dbReference type="Rhea" id="RHEA:54728"/>
        <dbReference type="Rhea" id="RHEA-COMP:10505"/>
        <dbReference type="Rhea" id="RHEA-COMP:10506"/>
        <dbReference type="ChEBI" id="CHEBI:57288"/>
        <dbReference type="ChEBI" id="CHEBI:57384"/>
        <dbReference type="ChEBI" id="CHEBI:83144"/>
        <dbReference type="ChEBI" id="CHEBI:83145"/>
        <dbReference type="EC" id="2.1.3.15"/>
    </reaction>
</comment>
<comment type="pathway">
    <text evidence="1">Lipid metabolism; malonyl-CoA biosynthesis; malonyl-CoA from acetyl-CoA: step 1/1.</text>
</comment>
<comment type="subunit">
    <text evidence="1">Acetyl-CoA carboxylase is a heterohexamer composed of biotin carboxyl carrier protein (AccB), biotin carboxylase (AccC) and two subunits each of ACCase subunit alpha (AccA) and ACCase subunit beta (AccD).</text>
</comment>
<comment type="subcellular location">
    <subcellularLocation>
        <location evidence="1">Cytoplasm</location>
    </subcellularLocation>
</comment>
<comment type="similarity">
    <text evidence="1">Belongs to the AccD/PCCB family.</text>
</comment>
<name>ACCD_SALRD</name>
<evidence type="ECO:0000255" key="1">
    <source>
        <dbReference type="HAMAP-Rule" id="MF_01395"/>
    </source>
</evidence>
<evidence type="ECO:0000255" key="2">
    <source>
        <dbReference type="PROSITE-ProRule" id="PRU01136"/>
    </source>
</evidence>
<keyword id="KW-0067">ATP-binding</keyword>
<keyword id="KW-0963">Cytoplasm</keyword>
<keyword id="KW-0275">Fatty acid biosynthesis</keyword>
<keyword id="KW-0276">Fatty acid metabolism</keyword>
<keyword id="KW-0444">Lipid biosynthesis</keyword>
<keyword id="KW-0443">Lipid metabolism</keyword>
<keyword id="KW-0547">Nucleotide-binding</keyword>
<keyword id="KW-1185">Reference proteome</keyword>
<keyword id="KW-0808">Transferase</keyword>
<proteinExistence type="inferred from homology"/>